<dbReference type="EMBL" id="AL049667">
    <property type="protein sequence ID" value="CAB41242.1"/>
    <property type="molecule type" value="mRNA"/>
</dbReference>
<dbReference type="EMBL" id="AL022398">
    <property type="status" value="NOT_ANNOTATED_CDS"/>
    <property type="molecule type" value="Genomic_DNA"/>
</dbReference>
<dbReference type="EMBL" id="CH471100">
    <property type="protein sequence ID" value="EAW93444.1"/>
    <property type="molecule type" value="Genomic_DNA"/>
</dbReference>
<dbReference type="EMBL" id="BC110302">
    <property type="protein sequence ID" value="AAI10303.1"/>
    <property type="molecule type" value="mRNA"/>
</dbReference>
<dbReference type="EMBL" id="BC130417">
    <property type="protein sequence ID" value="AAI30418.1"/>
    <property type="molecule type" value="mRNA"/>
</dbReference>
<dbReference type="EMBL" id="BC144139">
    <property type="protein sequence ID" value="AAI44140.1"/>
    <property type="molecule type" value="mRNA"/>
</dbReference>
<dbReference type="CCDS" id="CCDS1490.2">
    <molecule id="Q9Y228-1"/>
</dbReference>
<dbReference type="CCDS" id="CCDS81422.1">
    <molecule id="Q9Y228-2"/>
</dbReference>
<dbReference type="RefSeq" id="NP_001274683.1">
    <property type="nucleotide sequence ID" value="NM_001287754.1"/>
</dbReference>
<dbReference type="RefSeq" id="NP_001307072.1">
    <molecule id="Q9Y228-1"/>
    <property type="nucleotide sequence ID" value="NM_001320143.2"/>
</dbReference>
<dbReference type="RefSeq" id="NP_001307073.1">
    <molecule id="Q9Y228-2"/>
    <property type="nucleotide sequence ID" value="NM_001320144.2"/>
</dbReference>
<dbReference type="RefSeq" id="NP_079504.2">
    <molecule id="Q9Y228-1"/>
    <property type="nucleotide sequence ID" value="NM_025228.4"/>
</dbReference>
<dbReference type="SMR" id="Q9Y228"/>
<dbReference type="BioGRID" id="123249">
    <property type="interactions" value="83"/>
</dbReference>
<dbReference type="FunCoup" id="Q9Y228">
    <property type="interactions" value="421"/>
</dbReference>
<dbReference type="IntAct" id="Q9Y228">
    <property type="interactions" value="93"/>
</dbReference>
<dbReference type="MINT" id="Q9Y228"/>
<dbReference type="STRING" id="9606.ENSP00000355991"/>
<dbReference type="GlyGen" id="Q9Y228">
    <property type="glycosylation" value="1 site, 1 O-linked glycan (1 site)"/>
</dbReference>
<dbReference type="iPTMnet" id="Q9Y228"/>
<dbReference type="MetOSite" id="Q9Y228"/>
<dbReference type="PhosphoSitePlus" id="Q9Y228"/>
<dbReference type="SwissPalm" id="Q9Y228"/>
<dbReference type="BioMuta" id="TRAF3IP3"/>
<dbReference type="DMDM" id="88984949"/>
<dbReference type="MassIVE" id="Q9Y228"/>
<dbReference type="PaxDb" id="9606-ENSP00000355991"/>
<dbReference type="PeptideAtlas" id="Q9Y228"/>
<dbReference type="ProteomicsDB" id="85616">
    <molecule id="Q9Y228-1"/>
</dbReference>
<dbReference type="ProteomicsDB" id="85617">
    <molecule id="Q9Y228-2"/>
</dbReference>
<dbReference type="ProteomicsDB" id="85618">
    <molecule id="Q9Y228-3"/>
</dbReference>
<dbReference type="Antibodypedia" id="34596">
    <property type="antibodies" value="194 antibodies from 27 providers"/>
</dbReference>
<dbReference type="DNASU" id="80342"/>
<dbReference type="Ensembl" id="ENST00000367024.5">
    <molecule id="Q9Y228-1"/>
    <property type="protein sequence ID" value="ENSP00000355991.1"/>
    <property type="gene ID" value="ENSG00000009790.15"/>
</dbReference>
<dbReference type="Ensembl" id="ENST00000367025.8">
    <molecule id="Q9Y228-1"/>
    <property type="protein sequence ID" value="ENSP00000355992.3"/>
    <property type="gene ID" value="ENSG00000009790.15"/>
</dbReference>
<dbReference type="Ensembl" id="ENST00000367026.7">
    <molecule id="Q9Y228-2"/>
    <property type="protein sequence ID" value="ENSP00000355993.3"/>
    <property type="gene ID" value="ENSG00000009790.15"/>
</dbReference>
<dbReference type="Ensembl" id="ENST00000478359.5">
    <molecule id="Q9Y228-3"/>
    <property type="protein sequence ID" value="ENSP00000417665.1"/>
    <property type="gene ID" value="ENSG00000009790.15"/>
</dbReference>
<dbReference type="GeneID" id="80342"/>
<dbReference type="KEGG" id="hsa:80342"/>
<dbReference type="MANE-Select" id="ENST00000367025.8">
    <property type="protein sequence ID" value="ENSP00000355992.3"/>
    <property type="RefSeq nucleotide sequence ID" value="NM_025228.4"/>
    <property type="RefSeq protein sequence ID" value="NP_079504.2"/>
</dbReference>
<dbReference type="UCSC" id="uc001hhm.4">
    <molecule id="Q9Y228-1"/>
    <property type="organism name" value="human"/>
</dbReference>
<dbReference type="AGR" id="HGNC:30766"/>
<dbReference type="CTD" id="80342"/>
<dbReference type="DisGeNET" id="80342"/>
<dbReference type="GeneCards" id="TRAF3IP3"/>
<dbReference type="HGNC" id="HGNC:30766">
    <property type="gene designation" value="TRAF3IP3"/>
</dbReference>
<dbReference type="HPA" id="ENSG00000009790">
    <property type="expression patterns" value="Tissue enriched (lymphoid)"/>
</dbReference>
<dbReference type="MIM" id="608255">
    <property type="type" value="gene"/>
</dbReference>
<dbReference type="neXtProt" id="NX_Q9Y228"/>
<dbReference type="OpenTargets" id="ENSG00000009790"/>
<dbReference type="PharmGKB" id="PA142670711"/>
<dbReference type="VEuPathDB" id="HostDB:ENSG00000009790"/>
<dbReference type="eggNOG" id="ENOG502RG0V">
    <property type="taxonomic scope" value="Eukaryota"/>
</dbReference>
<dbReference type="GeneTree" id="ENSGT00940000160260"/>
<dbReference type="HOGENOM" id="CLU_038582_0_0_1"/>
<dbReference type="InParanoid" id="Q9Y228"/>
<dbReference type="OMA" id="KEKEWDF"/>
<dbReference type="OrthoDB" id="8886722at2759"/>
<dbReference type="PAN-GO" id="Q9Y228">
    <property type="GO annotations" value="0 GO annotations based on evolutionary models"/>
</dbReference>
<dbReference type="PhylomeDB" id="Q9Y228"/>
<dbReference type="TreeFam" id="TF334641"/>
<dbReference type="PathwayCommons" id="Q9Y228"/>
<dbReference type="SignaLink" id="Q9Y228"/>
<dbReference type="BioGRID-ORCS" id="80342">
    <property type="hits" value="15 hits in 1148 CRISPR screens"/>
</dbReference>
<dbReference type="ChiTaRS" id="TRAF3IP3">
    <property type="organism name" value="human"/>
</dbReference>
<dbReference type="GeneWiki" id="TRAF3IP3"/>
<dbReference type="GenomeRNAi" id="80342"/>
<dbReference type="Pharos" id="Q9Y228">
    <property type="development level" value="Tbio"/>
</dbReference>
<dbReference type="PRO" id="PR:Q9Y228"/>
<dbReference type="Proteomes" id="UP000005640">
    <property type="component" value="Chromosome 1"/>
</dbReference>
<dbReference type="RNAct" id="Q9Y228">
    <property type="molecule type" value="protein"/>
</dbReference>
<dbReference type="Bgee" id="ENSG00000009790">
    <property type="expression patterns" value="Expressed in granulocyte and 130 other cell types or tissues"/>
</dbReference>
<dbReference type="ExpressionAtlas" id="Q9Y228">
    <property type="expression patterns" value="baseline and differential"/>
</dbReference>
<dbReference type="GO" id="GO:0000139">
    <property type="term" value="C:Golgi membrane"/>
    <property type="evidence" value="ECO:0007669"/>
    <property type="project" value="UniProtKB-SubCell"/>
</dbReference>
<dbReference type="GO" id="GO:0005765">
    <property type="term" value="C:lysosomal membrane"/>
    <property type="evidence" value="ECO:0007669"/>
    <property type="project" value="UniProtKB-SubCell"/>
</dbReference>
<dbReference type="GO" id="GO:0005741">
    <property type="term" value="C:mitochondrial outer membrane"/>
    <property type="evidence" value="ECO:0000314"/>
    <property type="project" value="UniProt"/>
</dbReference>
<dbReference type="GO" id="GO:0005739">
    <property type="term" value="C:mitochondrion"/>
    <property type="evidence" value="ECO:0000314"/>
    <property type="project" value="UniProt"/>
</dbReference>
<dbReference type="GO" id="GO:0005886">
    <property type="term" value="C:plasma membrane"/>
    <property type="evidence" value="ECO:0007669"/>
    <property type="project" value="UniProtKB-SubCell"/>
</dbReference>
<dbReference type="GO" id="GO:0060090">
    <property type="term" value="F:molecular adaptor activity"/>
    <property type="evidence" value="ECO:0000314"/>
    <property type="project" value="UniProt"/>
</dbReference>
<dbReference type="GO" id="GO:0030674">
    <property type="term" value="F:protein-macromolecule adaptor activity"/>
    <property type="evidence" value="ECO:0000314"/>
    <property type="project" value="UniProt"/>
</dbReference>
<dbReference type="GO" id="GO:0002753">
    <property type="term" value="P:cytoplasmic pattern recognition receptor signaling pathway"/>
    <property type="evidence" value="ECO:0000314"/>
    <property type="project" value="UniProt"/>
</dbReference>
<dbReference type="GO" id="GO:0032481">
    <property type="term" value="P:positive regulation of type I interferon production"/>
    <property type="evidence" value="ECO:0000314"/>
    <property type="project" value="UniProt"/>
</dbReference>
<dbReference type="CDD" id="cd21912">
    <property type="entry name" value="CC1_T3JAM"/>
    <property type="match status" value="1"/>
</dbReference>
<dbReference type="InterPro" id="IPR051176">
    <property type="entry name" value="Cent_Immune-Sig_Mod"/>
</dbReference>
<dbReference type="PANTHER" id="PTHR15715">
    <property type="entry name" value="CENTROSOMAL PROTEIN OF 170 KDA"/>
    <property type="match status" value="1"/>
</dbReference>
<dbReference type="PANTHER" id="PTHR15715:SF21">
    <property type="entry name" value="TRAF3-INTERACTING JNK-ACTIVATING MODULATOR"/>
    <property type="match status" value="1"/>
</dbReference>
<dbReference type="SUPFAM" id="SSF57997">
    <property type="entry name" value="Tropomyosin"/>
    <property type="match status" value="1"/>
</dbReference>
<gene>
    <name type="primary">TRAF3IP3</name>
    <name type="synonym">T3JAM</name>
</gene>
<protein>
    <recommendedName>
        <fullName>TRAF3-interacting JNK-activating modulator</fullName>
    </recommendedName>
    <alternativeName>
        <fullName>TRAF3-interacting protein 3</fullName>
    </alternativeName>
</protein>
<organism>
    <name type="scientific">Homo sapiens</name>
    <name type="common">Human</name>
    <dbReference type="NCBI Taxonomy" id="9606"/>
    <lineage>
        <taxon>Eukaryota</taxon>
        <taxon>Metazoa</taxon>
        <taxon>Chordata</taxon>
        <taxon>Craniata</taxon>
        <taxon>Vertebrata</taxon>
        <taxon>Euteleostomi</taxon>
        <taxon>Mammalia</taxon>
        <taxon>Eutheria</taxon>
        <taxon>Euarchontoglires</taxon>
        <taxon>Primates</taxon>
        <taxon>Haplorrhini</taxon>
        <taxon>Catarrhini</taxon>
        <taxon>Hominidae</taxon>
        <taxon>Homo</taxon>
    </lineage>
</organism>
<reference key="1">
    <citation type="submission" date="1999-04" db="EMBL/GenBank/DDBJ databases">
        <authorList>
            <person name="Rhodes S."/>
        </authorList>
    </citation>
    <scope>NUCLEOTIDE SEQUENCE [LARGE SCALE MRNA] (ISOFORM 2)</scope>
</reference>
<reference key="2">
    <citation type="journal article" date="2006" name="Nature">
        <title>The DNA sequence and biological annotation of human chromosome 1.</title>
        <authorList>
            <person name="Gregory S.G."/>
            <person name="Barlow K.F."/>
            <person name="McLay K.E."/>
            <person name="Kaul R."/>
            <person name="Swarbreck D."/>
            <person name="Dunham A."/>
            <person name="Scott C.E."/>
            <person name="Howe K.L."/>
            <person name="Woodfine K."/>
            <person name="Spencer C.C.A."/>
            <person name="Jones M.C."/>
            <person name="Gillson C."/>
            <person name="Searle S."/>
            <person name="Zhou Y."/>
            <person name="Kokocinski F."/>
            <person name="McDonald L."/>
            <person name="Evans R."/>
            <person name="Phillips K."/>
            <person name="Atkinson A."/>
            <person name="Cooper R."/>
            <person name="Jones C."/>
            <person name="Hall R.E."/>
            <person name="Andrews T.D."/>
            <person name="Lloyd C."/>
            <person name="Ainscough R."/>
            <person name="Almeida J.P."/>
            <person name="Ambrose K.D."/>
            <person name="Anderson F."/>
            <person name="Andrew R.W."/>
            <person name="Ashwell R.I.S."/>
            <person name="Aubin K."/>
            <person name="Babbage A.K."/>
            <person name="Bagguley C.L."/>
            <person name="Bailey J."/>
            <person name="Beasley H."/>
            <person name="Bethel G."/>
            <person name="Bird C.P."/>
            <person name="Bray-Allen S."/>
            <person name="Brown J.Y."/>
            <person name="Brown A.J."/>
            <person name="Buckley D."/>
            <person name="Burton J."/>
            <person name="Bye J."/>
            <person name="Carder C."/>
            <person name="Chapman J.C."/>
            <person name="Clark S.Y."/>
            <person name="Clarke G."/>
            <person name="Clee C."/>
            <person name="Cobley V."/>
            <person name="Collier R.E."/>
            <person name="Corby N."/>
            <person name="Coville G.J."/>
            <person name="Davies J."/>
            <person name="Deadman R."/>
            <person name="Dunn M."/>
            <person name="Earthrowl M."/>
            <person name="Ellington A.G."/>
            <person name="Errington H."/>
            <person name="Frankish A."/>
            <person name="Frankland J."/>
            <person name="French L."/>
            <person name="Garner P."/>
            <person name="Garnett J."/>
            <person name="Gay L."/>
            <person name="Ghori M.R.J."/>
            <person name="Gibson R."/>
            <person name="Gilby L.M."/>
            <person name="Gillett W."/>
            <person name="Glithero R.J."/>
            <person name="Grafham D.V."/>
            <person name="Griffiths C."/>
            <person name="Griffiths-Jones S."/>
            <person name="Grocock R."/>
            <person name="Hammond S."/>
            <person name="Harrison E.S.I."/>
            <person name="Hart E."/>
            <person name="Haugen E."/>
            <person name="Heath P.D."/>
            <person name="Holmes S."/>
            <person name="Holt K."/>
            <person name="Howden P.J."/>
            <person name="Hunt A.R."/>
            <person name="Hunt S.E."/>
            <person name="Hunter G."/>
            <person name="Isherwood J."/>
            <person name="James R."/>
            <person name="Johnson C."/>
            <person name="Johnson D."/>
            <person name="Joy A."/>
            <person name="Kay M."/>
            <person name="Kershaw J.K."/>
            <person name="Kibukawa M."/>
            <person name="Kimberley A.M."/>
            <person name="King A."/>
            <person name="Knights A.J."/>
            <person name="Lad H."/>
            <person name="Laird G."/>
            <person name="Lawlor S."/>
            <person name="Leongamornlert D.A."/>
            <person name="Lloyd D.M."/>
            <person name="Loveland J."/>
            <person name="Lovell J."/>
            <person name="Lush M.J."/>
            <person name="Lyne R."/>
            <person name="Martin S."/>
            <person name="Mashreghi-Mohammadi M."/>
            <person name="Matthews L."/>
            <person name="Matthews N.S.W."/>
            <person name="McLaren S."/>
            <person name="Milne S."/>
            <person name="Mistry S."/>
            <person name="Moore M.J.F."/>
            <person name="Nickerson T."/>
            <person name="O'Dell C.N."/>
            <person name="Oliver K."/>
            <person name="Palmeiri A."/>
            <person name="Palmer S.A."/>
            <person name="Parker A."/>
            <person name="Patel D."/>
            <person name="Pearce A.V."/>
            <person name="Peck A.I."/>
            <person name="Pelan S."/>
            <person name="Phelps K."/>
            <person name="Phillimore B.J."/>
            <person name="Plumb R."/>
            <person name="Rajan J."/>
            <person name="Raymond C."/>
            <person name="Rouse G."/>
            <person name="Saenphimmachak C."/>
            <person name="Sehra H.K."/>
            <person name="Sheridan E."/>
            <person name="Shownkeen R."/>
            <person name="Sims S."/>
            <person name="Skuce C.D."/>
            <person name="Smith M."/>
            <person name="Steward C."/>
            <person name="Subramanian S."/>
            <person name="Sycamore N."/>
            <person name="Tracey A."/>
            <person name="Tromans A."/>
            <person name="Van Helmond Z."/>
            <person name="Wall M."/>
            <person name="Wallis J.M."/>
            <person name="White S."/>
            <person name="Whitehead S.L."/>
            <person name="Wilkinson J.E."/>
            <person name="Willey D.L."/>
            <person name="Williams H."/>
            <person name="Wilming L."/>
            <person name="Wray P.W."/>
            <person name="Wu Z."/>
            <person name="Coulson A."/>
            <person name="Vaudin M."/>
            <person name="Sulston J.E."/>
            <person name="Durbin R.M."/>
            <person name="Hubbard T."/>
            <person name="Wooster R."/>
            <person name="Dunham I."/>
            <person name="Carter N.P."/>
            <person name="McVean G."/>
            <person name="Ross M.T."/>
            <person name="Harrow J."/>
            <person name="Olson M.V."/>
            <person name="Beck S."/>
            <person name="Rogers J."/>
            <person name="Bentley D.R."/>
        </authorList>
    </citation>
    <scope>NUCLEOTIDE SEQUENCE [LARGE SCALE GENOMIC DNA] (ISOFORM 1)</scope>
</reference>
<reference key="3">
    <citation type="submission" date="2005-09" db="EMBL/GenBank/DDBJ databases">
        <authorList>
            <person name="Mural R.J."/>
            <person name="Istrail S."/>
            <person name="Sutton G.G."/>
            <person name="Florea L."/>
            <person name="Halpern A.L."/>
            <person name="Mobarry C.M."/>
            <person name="Lippert R."/>
            <person name="Walenz B."/>
            <person name="Shatkay H."/>
            <person name="Dew I."/>
            <person name="Miller J.R."/>
            <person name="Flanigan M.J."/>
            <person name="Edwards N.J."/>
            <person name="Bolanos R."/>
            <person name="Fasulo D."/>
            <person name="Halldorsson B.V."/>
            <person name="Hannenhalli S."/>
            <person name="Turner R."/>
            <person name="Yooseph S."/>
            <person name="Lu F."/>
            <person name="Nusskern D.R."/>
            <person name="Shue B.C."/>
            <person name="Zheng X.H."/>
            <person name="Zhong F."/>
            <person name="Delcher A.L."/>
            <person name="Huson D.H."/>
            <person name="Kravitz S.A."/>
            <person name="Mouchard L."/>
            <person name="Reinert K."/>
            <person name="Remington K.A."/>
            <person name="Clark A.G."/>
            <person name="Waterman M.S."/>
            <person name="Eichler E.E."/>
            <person name="Adams M.D."/>
            <person name="Hunkapiller M.W."/>
            <person name="Myers E.W."/>
            <person name="Venter J.C."/>
        </authorList>
    </citation>
    <scope>NUCLEOTIDE SEQUENCE [LARGE SCALE GENOMIC DNA]</scope>
    <scope>VARIANT GLU-373</scope>
</reference>
<reference key="4">
    <citation type="journal article" date="2004" name="Genome Res.">
        <title>The status, quality, and expansion of the NIH full-length cDNA project: the Mammalian Gene Collection (MGC).</title>
        <authorList>
            <consortium name="The MGC Project Team"/>
        </authorList>
    </citation>
    <scope>NUCLEOTIDE SEQUENCE [LARGE SCALE MRNA] (ISOFORMS 1 AND 3)</scope>
    <scope>VARIANT GLU-373</scope>
    <source>
        <tissue>Blood</tissue>
        <tissue>Brain</tissue>
    </source>
</reference>
<reference key="5">
    <citation type="journal article" date="2015" name="Proteomics">
        <title>N-terminome analysis of the human mitochondrial proteome.</title>
        <authorList>
            <person name="Vaca Jacome A.S."/>
            <person name="Rabilloud T."/>
            <person name="Schaeffer-Reiss C."/>
            <person name="Rompais M."/>
            <person name="Ayoub D."/>
            <person name="Lane L."/>
            <person name="Bairoch A."/>
            <person name="Van Dorsselaer A."/>
            <person name="Carapito C."/>
        </authorList>
    </citation>
    <scope>IDENTIFICATION BY MASS SPECTROMETRY [LARGE SCALE ANALYSIS]</scope>
</reference>
<reference key="6">
    <citation type="journal article" date="2015" name="J. Exp. Med.">
        <title>T cell development involves TRAF3IP3-mediated ERK signaling in the Golgi.</title>
        <authorList>
            <person name="Zou Q."/>
            <person name="Jin J."/>
            <person name="Xiao Y."/>
            <person name="Hu H."/>
            <person name="Zhou X."/>
            <person name="Jie Z."/>
            <person name="Xie X."/>
            <person name="Li J.Y."/>
            <person name="Cheng X."/>
            <person name="Sun S.C."/>
        </authorList>
    </citation>
    <scope>FUNCTION</scope>
    <scope>SUBCELLULAR LOCATION</scope>
    <scope>INTERACTION WITH MAP2K1</scope>
</reference>
<reference key="7">
    <citation type="journal article" date="2018" name="J. Exp. Med.">
        <title>Metabolic control of regulatory T cell stability and function by TRAF3IP3 at the lysosome.</title>
        <authorList>
            <person name="Yu X."/>
            <person name="Teng X.L."/>
            <person name="Wang F."/>
            <person name="Zheng Y."/>
            <person name="Qu G."/>
            <person name="Zhou Y."/>
            <person name="Hu Z."/>
            <person name="Wu Z."/>
            <person name="Chang Y."/>
            <person name="Chen L."/>
            <person name="Li H.B."/>
            <person name="Su B."/>
            <person name="Lu L."/>
            <person name="Liu Z."/>
            <person name="Sun S.C."/>
            <person name="Zou Q."/>
        </authorList>
    </citation>
    <scope>FUNCTION</scope>
    <scope>INTERACTION WITH PPP2CA</scope>
</reference>
<reference key="8">
    <citation type="journal article" date="2019" name="J. Biol. Chem.">
        <title>TRAF3-interacting JNK-activating modulator promotes inflammation by stimulating translocation of Toll-like receptor 4 to lipid rafts.</title>
        <authorList>
            <person name="Li Y."/>
            <person name="Guan J."/>
            <person name="Wang W."/>
            <person name="Hou C."/>
            <person name="Zhou L."/>
            <person name="Ma J."/>
            <person name="Cheng Y."/>
            <person name="Jiao S."/>
            <person name="Zhou Z."/>
        </authorList>
    </citation>
    <scope>FUNCTION</scope>
    <scope>SUBCELLULAR LOCATION</scope>
    <scope>INTERACTION WITH TLR4</scope>
</reference>
<reference key="9">
    <citation type="journal article" date="2019" name="EMBO J.">
        <title>TRAF3IP3 mediates the recruitment of TRAF3 to MAVS for antiviral innate immunity.</title>
        <authorList>
            <person name="Zhu W."/>
            <person name="Li J."/>
            <person name="Zhang R."/>
            <person name="Cai Y."/>
            <person name="Wang C."/>
            <person name="Qi S."/>
            <person name="Chen S."/>
            <person name="Liang X."/>
            <person name="Qi N."/>
            <person name="Hou F."/>
        </authorList>
    </citation>
    <scope>FUNCTION</scope>
    <scope>INTERACTION WITH MAVS AND TRAF3</scope>
    <scope>SUBCELLULAR LOCATION</scope>
</reference>
<reference key="10">
    <citation type="journal article" date="2020" name="Nat. Commun.">
        <title>TRAF3IP3 negatively regulates cytosolic RNA induced anti-viral signaling by promoting TBK1 K48 ubiquitination.</title>
        <authorList>
            <person name="Deng M."/>
            <person name="Tam J.W."/>
            <person name="Wang L."/>
            <person name="Liang K."/>
            <person name="Li S."/>
            <person name="Zhang L."/>
            <person name="Guo H."/>
            <person name="Luo X."/>
            <person name="Zhang Y."/>
            <person name="Petrucelli A."/>
            <person name="Davis B.K."/>
            <person name="Conti B.J."/>
            <person name="June Brickey W."/>
            <person name="Ko C.C."/>
            <person name="Lei Y.L."/>
            <person name="Sun S."/>
            <person name="Ting J.P."/>
        </authorList>
    </citation>
    <scope>FUNCTION</scope>
    <scope>INTERACTION WITH TBK1 AND TRAF3</scope>
</reference>
<reference key="11">
    <citation type="journal article" date="2006" name="Science">
        <title>The consensus coding sequences of human breast and colorectal cancers.</title>
        <authorList>
            <person name="Sjoeblom T."/>
            <person name="Jones S."/>
            <person name="Wood L.D."/>
            <person name="Parsons D.W."/>
            <person name="Lin J."/>
            <person name="Barber T.D."/>
            <person name="Mandelker D."/>
            <person name="Leary R.J."/>
            <person name="Ptak J."/>
            <person name="Silliman N."/>
            <person name="Szabo S."/>
            <person name="Buckhaults P."/>
            <person name="Farrell C."/>
            <person name="Meeh P."/>
            <person name="Markowitz S.D."/>
            <person name="Willis J."/>
            <person name="Dawson D."/>
            <person name="Willson J.K.V."/>
            <person name="Gazdar A.F."/>
            <person name="Hartigan J."/>
            <person name="Wu L."/>
            <person name="Liu C."/>
            <person name="Parmigiani G."/>
            <person name="Park B.H."/>
            <person name="Bachman K.E."/>
            <person name="Papadopoulos N."/>
            <person name="Vogelstein B."/>
            <person name="Kinzler K.W."/>
            <person name="Velculescu V.E."/>
        </authorList>
    </citation>
    <scope>VARIANT [LARGE SCALE ANALYSIS] SER-529</scope>
</reference>
<proteinExistence type="evidence at protein level"/>
<feature type="chain" id="PRO_0000072403" description="TRAF3-interacting JNK-activating modulator">
    <location>
        <begin position="1"/>
        <end position="551"/>
    </location>
</feature>
<feature type="topological domain" description="Cytoplasmic" evidence="2">
    <location>
        <begin position="1"/>
        <end position="526"/>
    </location>
</feature>
<feature type="transmembrane region" description="Helical; Anchor for type IV membrane protein" evidence="2">
    <location>
        <begin position="527"/>
        <end position="544"/>
    </location>
</feature>
<feature type="topological domain" description="Extracellular" evidence="2">
    <location>
        <begin position="545"/>
        <end position="551"/>
    </location>
</feature>
<feature type="region of interest" description="Disordered" evidence="3">
    <location>
        <begin position="73"/>
        <end position="95"/>
    </location>
</feature>
<feature type="region of interest" description="Disordered" evidence="3">
    <location>
        <begin position="140"/>
        <end position="178"/>
    </location>
</feature>
<feature type="coiled-coil region" evidence="2">
    <location>
        <begin position="240"/>
        <end position="436"/>
    </location>
</feature>
<feature type="coiled-coil region" evidence="2">
    <location>
        <begin position="464"/>
        <end position="506"/>
    </location>
</feature>
<feature type="splice variant" id="VSP_017271" description="In isoform 2." evidence="13">
    <location>
        <begin position="95"/>
        <end position="114"/>
    </location>
</feature>
<feature type="splice variant" id="VSP_017272" description="In isoform 3." evidence="12">
    <original>GA</original>
    <variation>IN</variation>
    <location>
        <begin position="352"/>
        <end position="353"/>
    </location>
</feature>
<feature type="splice variant" id="VSP_017273" description="In isoform 3." evidence="12">
    <location>
        <begin position="354"/>
        <end position="551"/>
    </location>
</feature>
<feature type="sequence variant" id="VAR_024283" description="In dbSNP:rs669694." evidence="4 11">
    <original>Q</original>
    <variation>E</variation>
    <location>
        <position position="373"/>
    </location>
</feature>
<feature type="sequence variant" id="VAR_035664" description="In a colorectal cancer sample; somatic mutation." evidence="5">
    <original>P</original>
    <variation>S</variation>
    <location>
        <position position="529"/>
    </location>
</feature>
<comment type="function">
    <text evidence="6 7 8 9 10">Adapter protein that plays essential roles in both innate and adaptive immunity. Plays a crucial role in the regulation of thymocyte development (PubMed:26195727). Mechanistically, mediates TCR-stimulated activation through recruiting MAP2K1/MEK1 to the Golgi and, thereby, facilitating the interaction of MAP2K1/MEK1 with its activator BRAF (PubMed:26195727). Also plays an essential role in regulatory T-cell stability and function by recruiting the serine-threonine phosphatase catalytic subunit (PPP2CA) to the lysosome, thereby facilitating the interaction of PP2Ac with the mTORC1 component RPTOR and restricting glycolytic metabolism (PubMed:30115741). Positively regulates TLR4 signaling activity in macrophage-mediated inflammation by acting as a molecular clamp to facilitate LPS-induced translocation of TLR4 to lipid rafts (PubMed:30573680). In response to viral infection, facilitates the recruitment of TRAF3 to MAVS within mitochondria leading to IRF3 activation and interferon production (PubMed:31390091). However, participates in the maintenance of immune homeostasis and the prevention of overzealous innate immunity by promoting 'Lys-48'-dependent ubiquitination of TBK1 (PubMed:32366851).</text>
</comment>
<comment type="subunit">
    <text evidence="6 7 8 9 10">Interacts (via its coiled-coil domain) with TRAF3 (via isoleucine zipper) (PubMed:31390091, PubMed:32366851). Interacts with MAP2K1 (PubMed:26195727). Interacts with PPP2CA; this interaction targets PPP2CA to the lysosomes (PubMed:30115741). Interacts with TLR4 (PubMed:30573680). Interacts with MAVS (PubMed:31390091). Interacts with TBK1 (PubMed:32366851).</text>
</comment>
<comment type="interaction">
    <interactant intactId="EBI-765817">
        <id>Q9Y228</id>
    </interactant>
    <interactant intactId="EBI-19051169">
        <id>Q8N350-4</id>
        <label>CBARP</label>
    </interactant>
    <organismsDiffer>false</organismsDiffer>
    <experiments>3</experiments>
</comment>
<comment type="interaction">
    <interactant intactId="EBI-765817">
        <id>Q9Y228</id>
    </interactant>
    <interactant intactId="EBI-78219">
        <id>P45973</id>
        <label>CBX5</label>
    </interactant>
    <organismsDiffer>false</organismsDiffer>
    <experiments>3</experiments>
</comment>
<comment type="interaction">
    <interactant intactId="EBI-765817">
        <id>Q9Y228</id>
    </interactant>
    <interactant intactId="EBI-10972887">
        <id>Q96M89-2</id>
        <label>CCDC138</label>
    </interactant>
    <organismsDiffer>false</organismsDiffer>
    <experiments>3</experiments>
</comment>
<comment type="interaction">
    <interactant intactId="EBI-765817">
        <id>Q9Y228</id>
    </interactant>
    <interactant intactId="EBI-347573">
        <id>A6NC98</id>
        <label>CCDC88B</label>
    </interactant>
    <organismsDiffer>false</organismsDiffer>
    <experiments>3</experiments>
</comment>
<comment type="interaction">
    <interactant intactId="EBI-765817">
        <id>Q9Y228</id>
    </interactant>
    <interactant intactId="EBI-395261">
        <id>P24863</id>
        <label>CCNC</label>
    </interactant>
    <organismsDiffer>false</organismsDiffer>
    <experiments>3</experiments>
</comment>
<comment type="interaction">
    <interactant intactId="EBI-765817">
        <id>Q9Y228</id>
    </interactant>
    <interactant intactId="EBI-5278764">
        <id>Q96GN5</id>
        <label>CDCA7L</label>
    </interactant>
    <organismsDiffer>false</organismsDiffer>
    <experiments>3</experiments>
</comment>
<comment type="interaction">
    <interactant intactId="EBI-765817">
        <id>Q9Y228</id>
    </interactant>
    <interactant intactId="EBI-11975967">
        <id>Q76N32-2</id>
        <label>CEP68</label>
    </interactant>
    <organismsDiffer>false</organismsDiffer>
    <experiments>3</experiments>
</comment>
<comment type="interaction">
    <interactant intactId="EBI-765817">
        <id>Q9Y228</id>
    </interactant>
    <interactant intactId="EBI-739624">
        <id>Q8NHQ1</id>
        <label>CEP70</label>
    </interactant>
    <organismsDiffer>false</organismsDiffer>
    <experiments>3</experiments>
</comment>
<comment type="interaction">
    <interactant intactId="EBI-765817">
        <id>Q9Y228</id>
    </interactant>
    <interactant intactId="EBI-724524">
        <id>O75208</id>
        <label>COQ9</label>
    </interactant>
    <organismsDiffer>false</organismsDiffer>
    <experiments>3</experiments>
</comment>
<comment type="interaction">
    <interactant intactId="EBI-765817">
        <id>Q9Y228</id>
    </interactant>
    <interactant intactId="EBI-18013275">
        <id>Q7Z7G2</id>
        <label>CPLX4</label>
    </interactant>
    <organismsDiffer>false</organismsDiffer>
    <experiments>3</experiments>
</comment>
<comment type="interaction">
    <interactant intactId="EBI-765817">
        <id>Q9Y228</id>
    </interactant>
    <interactant intactId="EBI-852194">
        <id>Q68CJ9</id>
        <label>CREB3L3</label>
    </interactant>
    <organismsDiffer>false</organismsDiffer>
    <experiments>3</experiments>
</comment>
<comment type="interaction">
    <interactant intactId="EBI-765817">
        <id>Q9Y228</id>
    </interactant>
    <interactant intactId="EBI-8787095">
        <id>O00559</id>
        <label>EBAG9</label>
    </interactant>
    <organismsDiffer>false</organismsDiffer>
    <experiments>3</experiments>
</comment>
<comment type="interaction">
    <interactant intactId="EBI-765817">
        <id>Q9Y228</id>
    </interactant>
    <interactant intactId="EBI-489887">
        <id>P50402</id>
        <label>EMD</label>
    </interactant>
    <organismsDiffer>false</organismsDiffer>
    <experiments>9</experiments>
</comment>
<comment type="interaction">
    <interactant intactId="EBI-765817">
        <id>Q9Y228</id>
    </interactant>
    <interactant intactId="EBI-17640610">
        <id>P34910-2</id>
        <label>EVI2B</label>
    </interactant>
    <organismsDiffer>false</organismsDiffer>
    <experiments>3</experiments>
</comment>
<comment type="interaction">
    <interactant intactId="EBI-765817">
        <id>Q9Y228</id>
    </interactant>
    <interactant intactId="EBI-18304435">
        <id>Q5JX71</id>
        <label>FAM209A</label>
    </interactant>
    <organismsDiffer>false</organismsDiffer>
    <experiments>3</experiments>
</comment>
<comment type="interaction">
    <interactant intactId="EBI-765817">
        <id>Q9Y228</id>
    </interactant>
    <interactant intactId="EBI-743099">
        <id>Q969F0</id>
        <label>FATE1</label>
    </interactant>
    <organismsDiffer>false</organismsDiffer>
    <experiments>6</experiments>
</comment>
<comment type="interaction">
    <interactant intactId="EBI-765817">
        <id>Q9Y228</id>
    </interactant>
    <interactant intactId="EBI-5916454">
        <id>A6NEM1</id>
        <label>GOLGA6L9</label>
    </interactant>
    <organismsDiffer>false</organismsDiffer>
    <experiments>3</experiments>
</comment>
<comment type="interaction">
    <interactant intactId="EBI-765817">
        <id>Q9Y228</id>
    </interactant>
    <interactant intactId="EBI-3917143">
        <id>Q5T7V8</id>
        <label>GORAB</label>
    </interactant>
    <organismsDiffer>false</organismsDiffer>
    <experiments>3</experiments>
</comment>
<comment type="interaction">
    <interactant intactId="EBI-765817">
        <id>Q9Y228</id>
    </interactant>
    <interactant intactId="EBI-11984319">
        <id>Q8IUY3</id>
        <label>GRAMD2A</label>
    </interactant>
    <organismsDiffer>false</organismsDiffer>
    <experiments>3</experiments>
</comment>
<comment type="interaction">
    <interactant intactId="EBI-765817">
        <id>Q9Y228</id>
    </interactant>
    <interactant intactId="EBI-749265">
        <id>Q8N6L0</id>
        <label>KASH5</label>
    </interactant>
    <organismsDiffer>false</organismsDiffer>
    <experiments>6</experiments>
</comment>
<comment type="interaction">
    <interactant intactId="EBI-765817">
        <id>Q9Y228</id>
    </interactant>
    <interactant intactId="EBI-8632435">
        <id>P43628</id>
        <label>KIR2DL3</label>
    </interactant>
    <organismsDiffer>false</organismsDiffer>
    <experiments>3</experiments>
</comment>
<comment type="interaction">
    <interactant intactId="EBI-765817">
        <id>Q9Y228</id>
    </interactant>
    <interactant intactId="EBI-3044087">
        <id>Q7Z3Y8</id>
        <label>KRT27</label>
    </interactant>
    <organismsDiffer>false</organismsDiffer>
    <experiments>3</experiments>
</comment>
<comment type="interaction">
    <interactant intactId="EBI-765817">
        <id>Q9Y228</id>
    </interactant>
    <interactant intactId="EBI-11985629">
        <id>Q96JM7-2</id>
        <label>L3MBTL3</label>
    </interactant>
    <organismsDiffer>false</organismsDiffer>
    <experiments>5</experiments>
</comment>
<comment type="interaction">
    <interactant intactId="EBI-765817">
        <id>Q9Y228</id>
    </interactant>
    <interactant intactId="EBI-2830566">
        <id>Q9H400</id>
        <label>LIME1</label>
    </interactant>
    <organismsDiffer>false</organismsDiffer>
    <experiments>3</experiments>
</comment>
<comment type="interaction">
    <interactant intactId="EBI-765817">
        <id>Q9Y228</id>
    </interactant>
    <interactant intactId="EBI-11304917">
        <id>Q8N386</id>
        <label>LRRC25</label>
    </interactant>
    <organismsDiffer>false</organismsDiffer>
    <experiments>3</experiments>
</comment>
<comment type="interaction">
    <interactant intactId="EBI-765817">
        <id>Q9Y228</id>
    </interactant>
    <interactant intactId="EBI-11956541">
        <id>Q9GZY8-5</id>
        <label>MFF</label>
    </interactant>
    <organismsDiffer>false</organismsDiffer>
    <experiments>3</experiments>
</comment>
<comment type="interaction">
    <interactant intactId="EBI-765817">
        <id>Q9Y228</id>
    </interactant>
    <interactant intactId="EBI-11977115">
        <id>Q9UPX6</id>
        <label>MINAR1</label>
    </interactant>
    <organismsDiffer>false</organismsDiffer>
    <experiments>3</experiments>
</comment>
<comment type="interaction">
    <interactant intactId="EBI-765817">
        <id>Q9Y228</id>
    </interactant>
    <interactant intactId="EBI-713935">
        <id>Q9Y3A3</id>
        <label>MOB4</label>
    </interactant>
    <organismsDiffer>false</organismsDiffer>
    <experiments>4</experiments>
</comment>
<comment type="interaction">
    <interactant intactId="EBI-765817">
        <id>Q9Y228</id>
    </interactant>
    <interactant intactId="EBI-928842">
        <id>Q9GZM8</id>
        <label>NDEL1</label>
    </interactant>
    <organismsDiffer>false</organismsDiffer>
    <experiments>6</experiments>
</comment>
<comment type="interaction">
    <interactant intactId="EBI-765817">
        <id>Q9Y228</id>
    </interactant>
    <interactant intactId="EBI-6374637">
        <id>P59046</id>
        <label>NLRP12</label>
    </interactant>
    <organismsDiffer>false</organismsDiffer>
    <experiments>2</experiments>
</comment>
<comment type="interaction">
    <interactant intactId="EBI-765817">
        <id>Q9Y228</id>
    </interactant>
    <interactant intactId="EBI-1051317">
        <id>Q9H4L5</id>
        <label>OSBPL3</label>
    </interactant>
    <organismsDiffer>false</organismsDiffer>
    <experiments>3</experiments>
</comment>
<comment type="interaction">
    <interactant intactId="EBI-765817">
        <id>Q9Y228</id>
    </interactant>
    <interactant intactId="EBI-949945">
        <id>Q53GL0</id>
        <label>PLEKHO1</label>
    </interactant>
    <organismsDiffer>false</organismsDiffer>
    <experiments>3</experiments>
</comment>
<comment type="interaction">
    <interactant intactId="EBI-765817">
        <id>Q9Y228</id>
    </interactant>
    <interactant intactId="EBI-476586">
        <id>P17612</id>
        <label>PRKACA</label>
    </interactant>
    <organismsDiffer>false</organismsDiffer>
    <experiments>3</experiments>
</comment>
<comment type="interaction">
    <interactant intactId="EBI-765817">
        <id>Q9Y228</id>
    </interactant>
    <interactant intactId="EBI-1050964">
        <id>O43586</id>
        <label>PSTPIP1</label>
    </interactant>
    <organismsDiffer>false</organismsDiffer>
    <experiments>3</experiments>
</comment>
<comment type="interaction">
    <interactant intactId="EBI-765817">
        <id>Q9Y228</id>
    </interactant>
    <interactant intactId="EBI-717233">
        <id>Q9H0H5</id>
        <label>RACGAP1</label>
    </interactant>
    <organismsDiffer>false</organismsDiffer>
    <experiments>3</experiments>
</comment>
<comment type="interaction">
    <interactant intactId="EBI-765817">
        <id>Q9Y228</id>
    </interactant>
    <interactant intactId="EBI-746453">
        <id>P54725</id>
        <label>RAD23A</label>
    </interactant>
    <organismsDiffer>false</organismsDiffer>
    <experiments>3</experiments>
</comment>
<comment type="interaction">
    <interactant intactId="EBI-765817">
        <id>Q9Y228</id>
    </interactant>
    <interactant intactId="EBI-12375429">
        <id>Q7Z5B4-5</id>
        <label>RIC3</label>
    </interactant>
    <organismsDiffer>false</organismsDiffer>
    <experiments>3</experiments>
</comment>
<comment type="interaction">
    <interactant intactId="EBI-765817">
        <id>Q9Y228</id>
    </interactant>
    <interactant intactId="EBI-12072024">
        <id>Q5EBL4-3</id>
        <label>RILPL1</label>
    </interactant>
    <organismsDiffer>false</organismsDiffer>
    <experiments>3</experiments>
</comment>
<comment type="interaction">
    <interactant intactId="EBI-765817">
        <id>Q9Y228</id>
    </interactant>
    <interactant intactId="EBI-1773646">
        <id>Q9BRV8</id>
        <label>SIKE1</label>
    </interactant>
    <organismsDiffer>false</organismsDiffer>
    <experiments>4</experiments>
</comment>
<comment type="interaction">
    <interactant intactId="EBI-765817">
        <id>Q9Y228</id>
    </interactant>
    <interactant intactId="EBI-751145">
        <id>P23497</id>
        <label>SP100</label>
    </interactant>
    <organismsDiffer>false</organismsDiffer>
    <experiments>4</experiments>
</comment>
<comment type="interaction">
    <interactant intactId="EBI-765817">
        <id>Q9Y228</id>
    </interactant>
    <interactant intactId="EBI-6589365">
        <id>P23497-2</id>
        <label>SP100</label>
    </interactant>
    <organismsDiffer>false</organismsDiffer>
    <experiments>3</experiments>
</comment>
<comment type="interaction">
    <interactant intactId="EBI-765817">
        <id>Q9Y228</id>
    </interactant>
    <interactant intactId="EBI-740175">
        <id>Q9Y6E0</id>
        <label>STK24</label>
    </interactant>
    <organismsDiffer>false</organismsDiffer>
    <experiments>2</experiments>
</comment>
<comment type="interaction">
    <interactant intactId="EBI-765817">
        <id>Q9Y228</id>
    </interactant>
    <interactant intactId="EBI-20117546">
        <id>Q9H169-2</id>
        <label>STMN4</label>
    </interactant>
    <organismsDiffer>false</organismsDiffer>
    <experiments>3</experiments>
</comment>
<comment type="interaction">
    <interactant intactId="EBI-765817">
        <id>Q9Y228</id>
    </interactant>
    <interactant intactId="EBI-1773588">
        <id>Q5VSL9</id>
        <label>STRIP1</label>
    </interactant>
    <organismsDiffer>false</organismsDiffer>
    <experiments>4</experiments>
</comment>
<comment type="interaction">
    <interactant intactId="EBI-765817">
        <id>Q9Y228</id>
    </interactant>
    <interactant intactId="EBI-1046642">
        <id>O43815</id>
        <label>STRN</label>
    </interactant>
    <organismsDiffer>false</organismsDiffer>
    <experiments>4</experiments>
</comment>
<comment type="interaction">
    <interactant intactId="EBI-765817">
        <id>Q9Y228</id>
    </interactant>
    <interactant intactId="EBI-1053857">
        <id>Q13033</id>
        <label>STRN3</label>
    </interactant>
    <organismsDiffer>false</organismsDiffer>
    <experiments>4</experiments>
</comment>
<comment type="interaction">
    <interactant intactId="EBI-765817">
        <id>Q9Y228</id>
    </interactant>
    <interactant intactId="EBI-712466">
        <id>Q16623</id>
        <label>STX1A</label>
    </interactant>
    <organismsDiffer>false</organismsDiffer>
    <experiments>3</experiments>
</comment>
<comment type="interaction">
    <interactant intactId="EBI-765817">
        <id>Q9Y228</id>
    </interactant>
    <interactant intactId="EBI-744942">
        <id>Q12846</id>
        <label>STX4</label>
    </interactant>
    <organismsDiffer>false</organismsDiffer>
    <experiments>3</experiments>
</comment>
<comment type="interaction">
    <interactant intactId="EBI-765817">
        <id>Q9Y228</id>
    </interactant>
    <interactant intactId="EBI-1105213">
        <id>Q9UBB9</id>
        <label>TFIP11</label>
    </interactant>
    <organismsDiffer>false</organismsDiffer>
    <experiments>4</experiments>
</comment>
<comment type="interaction">
    <interactant intactId="EBI-765817">
        <id>Q9Y228</id>
    </interactant>
    <interactant intactId="EBI-296151">
        <id>P37173</id>
        <label>TGFBR2</label>
    </interactant>
    <organismsDiffer>false</organismsDiffer>
    <experiments>3</experiments>
</comment>
<comment type="interaction">
    <interactant intactId="EBI-765817">
        <id>Q9Y228</id>
    </interactant>
    <interactant intactId="EBI-7238458">
        <id>Q8IV31</id>
        <label>TMEM139</label>
    </interactant>
    <organismsDiffer>false</organismsDiffer>
    <experiments>3</experiments>
</comment>
<comment type="interaction">
    <interactant intactId="EBI-765817">
        <id>Q9Y228</id>
    </interactant>
    <interactant intactId="EBI-2341518">
        <id>Q9NQ86</id>
        <label>TRIM36</label>
    </interactant>
    <organismsDiffer>false</organismsDiffer>
    <experiments>3</experiments>
</comment>
<comment type="interaction">
    <interactant intactId="EBI-765817">
        <id>Q9Y228</id>
    </interactant>
    <interactant intactId="EBI-749118">
        <id>Q9BTA9</id>
        <label>WAC</label>
    </interactant>
    <organismsDiffer>false</organismsDiffer>
    <experiments>3</experiments>
</comment>
<comment type="interaction">
    <interactant intactId="EBI-765817">
        <id>Q9Y228</id>
    </interactant>
    <interactant intactId="EBI-741415">
        <id>O60232</id>
        <label>ZNRD2</label>
    </interactant>
    <organismsDiffer>false</organismsDiffer>
    <experiments>3</experiments>
</comment>
<comment type="interaction">
    <interactant intactId="EBI-765817">
        <id>Q9Y228</id>
    </interactant>
    <interactant intactId="EBI-527853">
        <id>Q9UGI0</id>
        <label>ZRANB1</label>
    </interactant>
    <organismsDiffer>false</organismsDiffer>
    <experiments>3</experiments>
</comment>
<comment type="subcellular location">
    <subcellularLocation>
        <location evidence="8">Cell membrane</location>
    </subcellularLocation>
    <subcellularLocation>
        <location evidence="6">Golgi apparatus membrane</location>
        <topology evidence="14">Single-pass type IV membrane protein</topology>
    </subcellularLocation>
    <subcellularLocation>
        <location evidence="1">Lysosome membrane</location>
    </subcellularLocation>
    <subcellularLocation>
        <location evidence="9">Mitochondrion outer membrane</location>
    </subcellularLocation>
    <text evidence="9">Accumulates on the mitochondria after virus infection.</text>
</comment>
<comment type="alternative products">
    <event type="alternative splicing"/>
    <isoform>
        <id>Q9Y228-1</id>
        <name>1</name>
        <sequence type="displayed"/>
    </isoform>
    <isoform>
        <id>Q9Y228-2</id>
        <name>2</name>
        <sequence type="described" ref="VSP_017271"/>
    </isoform>
    <isoform>
        <id>Q9Y228-3</id>
        <name>3</name>
        <sequence type="described" ref="VSP_017272 VSP_017273"/>
    </isoform>
</comment>
<accession>Q9Y228</accession>
<accession>A1L464</accession>
<accession>A6NIU9</accession>
<accession>Q2YDB5</accession>
<accession>Q4VY06</accession>
<accession>Q7Z706</accession>
<name>T3JAM_HUMAN</name>
<evidence type="ECO:0000250" key="1">
    <source>
        <dbReference type="UniProtKB" id="Q8C0G2"/>
    </source>
</evidence>
<evidence type="ECO:0000255" key="2"/>
<evidence type="ECO:0000256" key="3">
    <source>
        <dbReference type="SAM" id="MobiDB-lite"/>
    </source>
</evidence>
<evidence type="ECO:0000269" key="4">
    <source>
    </source>
</evidence>
<evidence type="ECO:0000269" key="5">
    <source>
    </source>
</evidence>
<evidence type="ECO:0000269" key="6">
    <source>
    </source>
</evidence>
<evidence type="ECO:0000269" key="7">
    <source>
    </source>
</evidence>
<evidence type="ECO:0000269" key="8">
    <source>
    </source>
</evidence>
<evidence type="ECO:0000269" key="9">
    <source>
    </source>
</evidence>
<evidence type="ECO:0000269" key="10">
    <source>
    </source>
</evidence>
<evidence type="ECO:0000269" key="11">
    <source ref="3"/>
</evidence>
<evidence type="ECO:0000303" key="12">
    <source>
    </source>
</evidence>
<evidence type="ECO:0000303" key="13">
    <source ref="1"/>
</evidence>
<evidence type="ECO:0000305" key="14"/>
<sequence>MISPDPRPSPGLARWAESYEAKCERRQEIRESRRCRPNVTTCRQVGKTLRIQQREQLQRARLQQFFRRRNLELEEKGKAQHPQAREQGPSRRPGQVTVLKEPLSCARRISSPREQVTGTSSEVFPAQHPPPSGICRDLSDHLSSQAGGLPPQDTPIKKPPKHHRGTQTKAEGPTIKNDASQQTNYGVAVLDKEIIQLSDYLKEALQRELVLKQKMVILQDLLSTLIQASDSSWKGQLNEDKLKGKLRSLENQLYTCTQKYSPWGMKKVLLEMEDQKNSYEQKAKESLQKVLEEKMNAEQQLQSTQRSLALAEQKCEEWRSQYEALKEDWRTLGTQHRELESQLHVLQSKLQGADSRDLQMNQALRFLENEHQQLQAKIECLQGDRDLCSLDTQDLQDQLKRSEAEKLTLVTRVQQLQGLLQNQSLQLQEQEKLLTKKDQALPVWSPKSFPNEVEPEGTGKEKDWDLRDQLQKKTLQLQAKEKECRELHSELDNLSDEYLSCLRKLQHCREELNQSQQLPPRRQCGRWLPVLMVVIAAALAVFLANKDNLMI</sequence>
<keyword id="KW-0025">Alternative splicing</keyword>
<keyword id="KW-1003">Cell membrane</keyword>
<keyword id="KW-0175">Coiled coil</keyword>
<keyword id="KW-0333">Golgi apparatus</keyword>
<keyword id="KW-0458">Lysosome</keyword>
<keyword id="KW-0472">Membrane</keyword>
<keyword id="KW-0496">Mitochondrion</keyword>
<keyword id="KW-1000">Mitochondrion outer membrane</keyword>
<keyword id="KW-1267">Proteomics identification</keyword>
<keyword id="KW-1185">Reference proteome</keyword>
<keyword id="KW-0812">Transmembrane</keyword>
<keyword id="KW-1133">Transmembrane helix</keyword>